<gene>
    <name type="ordered locus">HI_0243</name>
</gene>
<proteinExistence type="predicted"/>
<name>Y243_HAEIN</name>
<accession>P43971</accession>
<organism>
    <name type="scientific">Haemophilus influenzae (strain ATCC 51907 / DSM 11121 / KW20 / Rd)</name>
    <dbReference type="NCBI Taxonomy" id="71421"/>
    <lineage>
        <taxon>Bacteria</taxon>
        <taxon>Pseudomonadati</taxon>
        <taxon>Pseudomonadota</taxon>
        <taxon>Gammaproteobacteria</taxon>
        <taxon>Pasteurellales</taxon>
        <taxon>Pasteurellaceae</taxon>
        <taxon>Haemophilus</taxon>
    </lineage>
</organism>
<protein>
    <recommendedName>
        <fullName>Uncharacterized protein HI_0243</fullName>
    </recommendedName>
</protein>
<feature type="chain" id="PRO_0000077902" description="Uncharacterized protein HI_0243">
    <location>
        <begin position="1"/>
        <end position="172"/>
    </location>
</feature>
<sequence length="172" mass="20408">MQILEPQQFATWNEPIEMLYACHSKVKRFCRQLSILPDYLEKHGYTQAVLNDVEQILSYFNRAAPLHHDDEELDFFPQLVKVAPQTQTSIDELEKQHEYLHENWNALSVQLEELISEQRQDIDKHLIERFIQGYDRHIALEEPLFEMGRECLSADILTEMGKHMSARRQVKE</sequence>
<dbReference type="EMBL" id="L42023">
    <property type="protein sequence ID" value="AAC21913.1"/>
    <property type="molecule type" value="Genomic_DNA"/>
</dbReference>
<dbReference type="PIR" id="G64004">
    <property type="entry name" value="G64004"/>
</dbReference>
<dbReference type="RefSeq" id="NP_438413.1">
    <property type="nucleotide sequence ID" value="NC_000907.1"/>
</dbReference>
<dbReference type="SMR" id="P43971"/>
<dbReference type="STRING" id="71421.HI_0243"/>
<dbReference type="EnsemblBacteria" id="AAC21913">
    <property type="protein sequence ID" value="AAC21913"/>
    <property type="gene ID" value="HI_0243"/>
</dbReference>
<dbReference type="KEGG" id="hin:HI_0243"/>
<dbReference type="PATRIC" id="fig|71421.8.peg.258"/>
<dbReference type="eggNOG" id="COG3945">
    <property type="taxonomic scope" value="Bacteria"/>
</dbReference>
<dbReference type="HOGENOM" id="CLU_113668_0_0_6"/>
<dbReference type="OrthoDB" id="9780392at2"/>
<dbReference type="BioCyc" id="HINF71421:G1GJ1-258-MONOMER"/>
<dbReference type="Proteomes" id="UP000000579">
    <property type="component" value="Chromosome"/>
</dbReference>
<dbReference type="CDD" id="cd12108">
    <property type="entry name" value="Hr-like"/>
    <property type="match status" value="1"/>
</dbReference>
<dbReference type="Gene3D" id="1.20.120.520">
    <property type="entry name" value="nmb1532 protein domain like"/>
    <property type="match status" value="1"/>
</dbReference>
<dbReference type="InterPro" id="IPR012312">
    <property type="entry name" value="Hemerythrin-like"/>
</dbReference>
<dbReference type="Pfam" id="PF01814">
    <property type="entry name" value="Hemerythrin"/>
    <property type="match status" value="1"/>
</dbReference>
<reference key="1">
    <citation type="journal article" date="1995" name="Science">
        <title>Whole-genome random sequencing and assembly of Haemophilus influenzae Rd.</title>
        <authorList>
            <person name="Fleischmann R.D."/>
            <person name="Adams M.D."/>
            <person name="White O."/>
            <person name="Clayton R.A."/>
            <person name="Kirkness E.F."/>
            <person name="Kerlavage A.R."/>
            <person name="Bult C.J."/>
            <person name="Tomb J.-F."/>
            <person name="Dougherty B.A."/>
            <person name="Merrick J.M."/>
            <person name="McKenney K."/>
            <person name="Sutton G.G."/>
            <person name="FitzHugh W."/>
            <person name="Fields C.A."/>
            <person name="Gocayne J.D."/>
            <person name="Scott J.D."/>
            <person name="Shirley R."/>
            <person name="Liu L.-I."/>
            <person name="Glodek A."/>
            <person name="Kelley J.M."/>
            <person name="Weidman J.F."/>
            <person name="Phillips C.A."/>
            <person name="Spriggs T."/>
            <person name="Hedblom E."/>
            <person name="Cotton M.D."/>
            <person name="Utterback T.R."/>
            <person name="Hanna M.C."/>
            <person name="Nguyen D.T."/>
            <person name="Saudek D.M."/>
            <person name="Brandon R.C."/>
            <person name="Fine L.D."/>
            <person name="Fritchman J.L."/>
            <person name="Fuhrmann J.L."/>
            <person name="Geoghagen N.S.M."/>
            <person name="Gnehm C.L."/>
            <person name="McDonald L.A."/>
            <person name="Small K.V."/>
            <person name="Fraser C.M."/>
            <person name="Smith H.O."/>
            <person name="Venter J.C."/>
        </authorList>
    </citation>
    <scope>NUCLEOTIDE SEQUENCE [LARGE SCALE GENOMIC DNA]</scope>
    <source>
        <strain>ATCC 51907 / DSM 11121 / KW20 / Rd</strain>
    </source>
</reference>
<keyword id="KW-1185">Reference proteome</keyword>